<organism>
    <name type="scientific">Buchnera aphidicola subsp. Baizongia pistaciae (strain Bp)</name>
    <dbReference type="NCBI Taxonomy" id="224915"/>
    <lineage>
        <taxon>Bacteria</taxon>
        <taxon>Pseudomonadati</taxon>
        <taxon>Pseudomonadota</taxon>
        <taxon>Gammaproteobacteria</taxon>
        <taxon>Enterobacterales</taxon>
        <taxon>Erwiniaceae</taxon>
        <taxon>Buchnera</taxon>
    </lineage>
</organism>
<sequence length="118" mass="14291">MKKNNSNPLKINEYHTLVNKLFLLIEENIDKNQEKCDIDCELHHNMLIINLNNTNQVIINKQESLKQIWLATKKNGYHFEYINKQWICNRTKKDFWNVLQESCVYQTNKCIQFLKNIY</sequence>
<name>CYAY_BUCBP</name>
<dbReference type="EMBL" id="AE016826">
    <property type="protein sequence ID" value="AAO27236.1"/>
    <property type="molecule type" value="Genomic_DNA"/>
</dbReference>
<dbReference type="RefSeq" id="WP_011091637.1">
    <property type="nucleotide sequence ID" value="NC_004545.1"/>
</dbReference>
<dbReference type="SMR" id="P59463"/>
<dbReference type="STRING" id="224915.bbp_534"/>
<dbReference type="KEGG" id="bab:bbp_534"/>
<dbReference type="eggNOG" id="COG1965">
    <property type="taxonomic scope" value="Bacteria"/>
</dbReference>
<dbReference type="HOGENOM" id="CLU_080880_3_0_6"/>
<dbReference type="OrthoDB" id="285675at2"/>
<dbReference type="Proteomes" id="UP000000601">
    <property type="component" value="Chromosome"/>
</dbReference>
<dbReference type="GO" id="GO:0005829">
    <property type="term" value="C:cytosol"/>
    <property type="evidence" value="ECO:0007669"/>
    <property type="project" value="TreeGrafter"/>
</dbReference>
<dbReference type="GO" id="GO:0008199">
    <property type="term" value="F:ferric iron binding"/>
    <property type="evidence" value="ECO:0007669"/>
    <property type="project" value="InterPro"/>
</dbReference>
<dbReference type="GO" id="GO:0008198">
    <property type="term" value="F:ferrous iron binding"/>
    <property type="evidence" value="ECO:0007669"/>
    <property type="project" value="TreeGrafter"/>
</dbReference>
<dbReference type="GO" id="GO:0016226">
    <property type="term" value="P:iron-sulfur cluster assembly"/>
    <property type="evidence" value="ECO:0007669"/>
    <property type="project" value="UniProtKB-UniRule"/>
</dbReference>
<dbReference type="Gene3D" id="3.30.920.10">
    <property type="entry name" value="Frataxin/CyaY"/>
    <property type="match status" value="1"/>
</dbReference>
<dbReference type="HAMAP" id="MF_00142">
    <property type="entry name" value="CyaY"/>
    <property type="match status" value="1"/>
</dbReference>
<dbReference type="InterPro" id="IPR047584">
    <property type="entry name" value="CyaY"/>
</dbReference>
<dbReference type="InterPro" id="IPR002908">
    <property type="entry name" value="Frataxin/CyaY"/>
</dbReference>
<dbReference type="InterPro" id="IPR036524">
    <property type="entry name" value="Frataxin/CyaY_sf"/>
</dbReference>
<dbReference type="InterPro" id="IPR020895">
    <property type="entry name" value="Frataxin_CS"/>
</dbReference>
<dbReference type="NCBIfam" id="TIGR03421">
    <property type="entry name" value="FeS_CyaY"/>
    <property type="match status" value="1"/>
</dbReference>
<dbReference type="PANTHER" id="PTHR16821">
    <property type="entry name" value="FRATAXIN"/>
    <property type="match status" value="1"/>
</dbReference>
<dbReference type="PANTHER" id="PTHR16821:SF2">
    <property type="entry name" value="FRATAXIN, MITOCHONDRIAL"/>
    <property type="match status" value="1"/>
</dbReference>
<dbReference type="Pfam" id="PF01491">
    <property type="entry name" value="Frataxin_Cyay"/>
    <property type="match status" value="1"/>
</dbReference>
<dbReference type="SMART" id="SM01219">
    <property type="entry name" value="Frataxin_Cyay"/>
    <property type="match status" value="1"/>
</dbReference>
<dbReference type="SUPFAM" id="SSF55387">
    <property type="entry name" value="Frataxin/Nqo15-like"/>
    <property type="match status" value="1"/>
</dbReference>
<dbReference type="PROSITE" id="PS01344">
    <property type="entry name" value="FRATAXIN_1"/>
    <property type="match status" value="1"/>
</dbReference>
<dbReference type="PROSITE" id="PS50810">
    <property type="entry name" value="FRATAXIN_2"/>
    <property type="match status" value="1"/>
</dbReference>
<keyword id="KW-0408">Iron</keyword>
<keyword id="KW-0479">Metal-binding</keyword>
<keyword id="KW-1185">Reference proteome</keyword>
<feature type="chain" id="PRO_0000193932" description="Iron-sulfur cluster assembly protein CyaY">
    <location>
        <begin position="1"/>
        <end position="118"/>
    </location>
</feature>
<reference key="1">
    <citation type="journal article" date="2003" name="Proc. Natl. Acad. Sci. U.S.A.">
        <title>Reductive genome evolution in Buchnera aphidicola.</title>
        <authorList>
            <person name="van Ham R.C.H.J."/>
            <person name="Kamerbeek J."/>
            <person name="Palacios C."/>
            <person name="Rausell C."/>
            <person name="Abascal F."/>
            <person name="Bastolla U."/>
            <person name="Fernandez J.M."/>
            <person name="Jimenez L."/>
            <person name="Postigo M."/>
            <person name="Silva F.J."/>
            <person name="Tamames J."/>
            <person name="Viguera E."/>
            <person name="Latorre A."/>
            <person name="Valencia A."/>
            <person name="Moran F."/>
            <person name="Moya A."/>
        </authorList>
    </citation>
    <scope>NUCLEOTIDE SEQUENCE [LARGE SCALE GENOMIC DNA]</scope>
    <source>
        <strain>Bp</strain>
    </source>
</reference>
<gene>
    <name evidence="1" type="primary">cyaY</name>
    <name type="ordered locus">bbp_534</name>
</gene>
<protein>
    <recommendedName>
        <fullName evidence="1">Iron-sulfur cluster assembly protein CyaY</fullName>
    </recommendedName>
</protein>
<accession>P59463</accession>
<proteinExistence type="inferred from homology"/>
<comment type="function">
    <text evidence="1">Involved in iron-sulfur (Fe-S) cluster assembly. May act as a regulator of Fe-S biogenesis.</text>
</comment>
<comment type="similarity">
    <text evidence="1">Belongs to the frataxin family.</text>
</comment>
<evidence type="ECO:0000255" key="1">
    <source>
        <dbReference type="HAMAP-Rule" id="MF_00142"/>
    </source>
</evidence>